<reference key="1">
    <citation type="journal article" date="2013" name="Nature">
        <title>The zebrafish reference genome sequence and its relationship to the human genome.</title>
        <authorList>
            <person name="Howe K."/>
            <person name="Clark M.D."/>
            <person name="Torroja C.F."/>
            <person name="Torrance J."/>
            <person name="Berthelot C."/>
            <person name="Muffato M."/>
            <person name="Collins J.E."/>
            <person name="Humphray S."/>
            <person name="McLaren K."/>
            <person name="Matthews L."/>
            <person name="McLaren S."/>
            <person name="Sealy I."/>
            <person name="Caccamo M."/>
            <person name="Churcher C."/>
            <person name="Scott C."/>
            <person name="Barrett J.C."/>
            <person name="Koch R."/>
            <person name="Rauch G.J."/>
            <person name="White S."/>
            <person name="Chow W."/>
            <person name="Kilian B."/>
            <person name="Quintais L.T."/>
            <person name="Guerra-Assuncao J.A."/>
            <person name="Zhou Y."/>
            <person name="Gu Y."/>
            <person name="Yen J."/>
            <person name="Vogel J.H."/>
            <person name="Eyre T."/>
            <person name="Redmond S."/>
            <person name="Banerjee R."/>
            <person name="Chi J."/>
            <person name="Fu B."/>
            <person name="Langley E."/>
            <person name="Maguire S.F."/>
            <person name="Laird G.K."/>
            <person name="Lloyd D."/>
            <person name="Kenyon E."/>
            <person name="Donaldson S."/>
            <person name="Sehra H."/>
            <person name="Almeida-King J."/>
            <person name="Loveland J."/>
            <person name="Trevanion S."/>
            <person name="Jones M."/>
            <person name="Quail M."/>
            <person name="Willey D."/>
            <person name="Hunt A."/>
            <person name="Burton J."/>
            <person name="Sims S."/>
            <person name="McLay K."/>
            <person name="Plumb B."/>
            <person name="Davis J."/>
            <person name="Clee C."/>
            <person name="Oliver K."/>
            <person name="Clark R."/>
            <person name="Riddle C."/>
            <person name="Elliot D."/>
            <person name="Threadgold G."/>
            <person name="Harden G."/>
            <person name="Ware D."/>
            <person name="Begum S."/>
            <person name="Mortimore B."/>
            <person name="Kerry G."/>
            <person name="Heath P."/>
            <person name="Phillimore B."/>
            <person name="Tracey A."/>
            <person name="Corby N."/>
            <person name="Dunn M."/>
            <person name="Johnson C."/>
            <person name="Wood J."/>
            <person name="Clark S."/>
            <person name="Pelan S."/>
            <person name="Griffiths G."/>
            <person name="Smith M."/>
            <person name="Glithero R."/>
            <person name="Howden P."/>
            <person name="Barker N."/>
            <person name="Lloyd C."/>
            <person name="Stevens C."/>
            <person name="Harley J."/>
            <person name="Holt K."/>
            <person name="Panagiotidis G."/>
            <person name="Lovell J."/>
            <person name="Beasley H."/>
            <person name="Henderson C."/>
            <person name="Gordon D."/>
            <person name="Auger K."/>
            <person name="Wright D."/>
            <person name="Collins J."/>
            <person name="Raisen C."/>
            <person name="Dyer L."/>
            <person name="Leung K."/>
            <person name="Robertson L."/>
            <person name="Ambridge K."/>
            <person name="Leongamornlert D."/>
            <person name="McGuire S."/>
            <person name="Gilderthorp R."/>
            <person name="Griffiths C."/>
            <person name="Manthravadi D."/>
            <person name="Nichol S."/>
            <person name="Barker G."/>
            <person name="Whitehead S."/>
            <person name="Kay M."/>
            <person name="Brown J."/>
            <person name="Murnane C."/>
            <person name="Gray E."/>
            <person name="Humphries M."/>
            <person name="Sycamore N."/>
            <person name="Barker D."/>
            <person name="Saunders D."/>
            <person name="Wallis J."/>
            <person name="Babbage A."/>
            <person name="Hammond S."/>
            <person name="Mashreghi-Mohammadi M."/>
            <person name="Barr L."/>
            <person name="Martin S."/>
            <person name="Wray P."/>
            <person name="Ellington A."/>
            <person name="Matthews N."/>
            <person name="Ellwood M."/>
            <person name="Woodmansey R."/>
            <person name="Clark G."/>
            <person name="Cooper J."/>
            <person name="Tromans A."/>
            <person name="Grafham D."/>
            <person name="Skuce C."/>
            <person name="Pandian R."/>
            <person name="Andrews R."/>
            <person name="Harrison E."/>
            <person name="Kimberley A."/>
            <person name="Garnett J."/>
            <person name="Fosker N."/>
            <person name="Hall R."/>
            <person name="Garner P."/>
            <person name="Kelly D."/>
            <person name="Bird C."/>
            <person name="Palmer S."/>
            <person name="Gehring I."/>
            <person name="Berger A."/>
            <person name="Dooley C.M."/>
            <person name="Ersan-Urun Z."/>
            <person name="Eser C."/>
            <person name="Geiger H."/>
            <person name="Geisler M."/>
            <person name="Karotki L."/>
            <person name="Kirn A."/>
            <person name="Konantz J."/>
            <person name="Konantz M."/>
            <person name="Oberlander M."/>
            <person name="Rudolph-Geiger S."/>
            <person name="Teucke M."/>
            <person name="Lanz C."/>
            <person name="Raddatz G."/>
            <person name="Osoegawa K."/>
            <person name="Zhu B."/>
            <person name="Rapp A."/>
            <person name="Widaa S."/>
            <person name="Langford C."/>
            <person name="Yang F."/>
            <person name="Schuster S.C."/>
            <person name="Carter N.P."/>
            <person name="Harrow J."/>
            <person name="Ning Z."/>
            <person name="Herrero J."/>
            <person name="Searle S.M."/>
            <person name="Enright A."/>
            <person name="Geisler R."/>
            <person name="Plasterk R.H."/>
            <person name="Lee C."/>
            <person name="Westerfield M."/>
            <person name="de Jong P.J."/>
            <person name="Zon L.I."/>
            <person name="Postlethwait J.H."/>
            <person name="Nusslein-Volhard C."/>
            <person name="Hubbard T.J."/>
            <person name="Roest Crollius H."/>
            <person name="Rogers J."/>
            <person name="Stemple D.L."/>
        </authorList>
    </citation>
    <scope>NUCLEOTIDE SEQUENCE [LARGE SCALE GENOMIC DNA]</scope>
    <source>
        <strain>Tuebingen</strain>
    </source>
</reference>
<reference key="2">
    <citation type="submission" date="2005-04" db="EMBL/GenBank/DDBJ databases">
        <authorList>
            <consortium name="NIH - Zebrafish Gene Collection (ZGC) project"/>
        </authorList>
    </citation>
    <scope>NUCLEOTIDE SEQUENCE [LARGE SCALE MRNA]</scope>
    <source>
        <tissue>Larva</tissue>
    </source>
</reference>
<protein>
    <recommendedName>
        <fullName>Protein mago nashi homolog</fullName>
    </recommendedName>
</protein>
<name>MGN_DANRE</name>
<dbReference type="EMBL" id="BX927144">
    <property type="protein sequence ID" value="CAQ13313.1"/>
    <property type="molecule type" value="Genomic_DNA"/>
</dbReference>
<dbReference type="EMBL" id="BC093273">
    <property type="protein sequence ID" value="AAH93273.1"/>
    <property type="molecule type" value="mRNA"/>
</dbReference>
<dbReference type="RefSeq" id="NP_001017700.1">
    <property type="nucleotide sequence ID" value="NM_001017700.1"/>
</dbReference>
<dbReference type="SMR" id="Q566Y8"/>
<dbReference type="FunCoup" id="Q566Y8">
    <property type="interactions" value="2497"/>
</dbReference>
<dbReference type="STRING" id="7955.ENSDARP00000056404"/>
<dbReference type="PaxDb" id="7955-ENSDARP00000056404"/>
<dbReference type="Ensembl" id="ENSDART00000056405">
    <property type="protein sequence ID" value="ENSDARP00000056404"/>
    <property type="gene ID" value="ENSDARG00000038635"/>
</dbReference>
<dbReference type="Ensembl" id="ENSDART00000181585">
    <property type="protein sequence ID" value="ENSDARP00000146033"/>
    <property type="gene ID" value="ENSDARG00000109837"/>
</dbReference>
<dbReference type="GeneID" id="100005893"/>
<dbReference type="KEGG" id="dre:100005893"/>
<dbReference type="AGR" id="ZFIN:ZDB-GENE-041216-1"/>
<dbReference type="CTD" id="4116"/>
<dbReference type="ZFIN" id="ZDB-GENE-041216-1">
    <property type="gene designation" value="magoh"/>
</dbReference>
<dbReference type="eggNOG" id="KOG3392">
    <property type="taxonomic scope" value="Eukaryota"/>
</dbReference>
<dbReference type="HOGENOM" id="CLU_109497_1_1_1"/>
<dbReference type="InParanoid" id="Q566Y8"/>
<dbReference type="OMA" id="IRKEMWI"/>
<dbReference type="OrthoDB" id="6495301at2759"/>
<dbReference type="PhylomeDB" id="Q566Y8"/>
<dbReference type="TreeFam" id="TF300128"/>
<dbReference type="Reactome" id="R-DRE-72163">
    <property type="pathway name" value="mRNA Splicing - Major Pathway"/>
</dbReference>
<dbReference type="Reactome" id="R-DRE-975957">
    <property type="pathway name" value="Nonsense Mediated Decay (NMD) enhanced by the Exon Junction Complex (EJC)"/>
</dbReference>
<dbReference type="PRO" id="PR:Q566Y8"/>
<dbReference type="Proteomes" id="UP000000437">
    <property type="component" value="Alternate scaffold 8"/>
</dbReference>
<dbReference type="Proteomes" id="UP000000437">
    <property type="component" value="Chromosome 8"/>
</dbReference>
<dbReference type="Bgee" id="ENSDARG00000038635">
    <property type="expression patterns" value="Expressed in blastula and 22 other cell types or tissues"/>
</dbReference>
<dbReference type="GO" id="GO:0071013">
    <property type="term" value="C:catalytic step 2 spliceosome"/>
    <property type="evidence" value="ECO:0000318"/>
    <property type="project" value="GO_Central"/>
</dbReference>
<dbReference type="GO" id="GO:0005737">
    <property type="term" value="C:cytoplasm"/>
    <property type="evidence" value="ECO:0007669"/>
    <property type="project" value="UniProtKB-SubCell"/>
</dbReference>
<dbReference type="GO" id="GO:0035145">
    <property type="term" value="C:exon-exon junction complex"/>
    <property type="evidence" value="ECO:0000314"/>
    <property type="project" value="ZFIN"/>
</dbReference>
<dbReference type="GO" id="GO:0016607">
    <property type="term" value="C:nuclear speck"/>
    <property type="evidence" value="ECO:0007669"/>
    <property type="project" value="UniProtKB-SubCell"/>
</dbReference>
<dbReference type="GO" id="GO:0003723">
    <property type="term" value="F:RNA binding"/>
    <property type="evidence" value="ECO:0007669"/>
    <property type="project" value="UniProtKB-KW"/>
</dbReference>
<dbReference type="GO" id="GO:0006397">
    <property type="term" value="P:mRNA processing"/>
    <property type="evidence" value="ECO:0007669"/>
    <property type="project" value="UniProtKB-KW"/>
</dbReference>
<dbReference type="GO" id="GO:0051028">
    <property type="term" value="P:mRNA transport"/>
    <property type="evidence" value="ECO:0007669"/>
    <property type="project" value="UniProtKB-KW"/>
</dbReference>
<dbReference type="GO" id="GO:0000184">
    <property type="term" value="P:nuclear-transcribed mRNA catabolic process, nonsense-mediated decay"/>
    <property type="evidence" value="ECO:0007669"/>
    <property type="project" value="UniProtKB-KW"/>
</dbReference>
<dbReference type="GO" id="GO:0000381">
    <property type="term" value="P:regulation of alternative mRNA splicing, via spliceosome"/>
    <property type="evidence" value="ECO:0000250"/>
    <property type="project" value="UniProtKB"/>
</dbReference>
<dbReference type="GO" id="GO:0010468">
    <property type="term" value="P:regulation of gene expression"/>
    <property type="evidence" value="ECO:0000315"/>
    <property type="project" value="ZFIN"/>
</dbReference>
<dbReference type="GO" id="GO:0006417">
    <property type="term" value="P:regulation of translation"/>
    <property type="evidence" value="ECO:0007669"/>
    <property type="project" value="UniProtKB-KW"/>
</dbReference>
<dbReference type="GO" id="GO:0008380">
    <property type="term" value="P:RNA splicing"/>
    <property type="evidence" value="ECO:0000318"/>
    <property type="project" value="GO_Central"/>
</dbReference>
<dbReference type="CDD" id="cd11295">
    <property type="entry name" value="Mago_nashi"/>
    <property type="match status" value="1"/>
</dbReference>
<dbReference type="FunFam" id="3.30.1560.10:FF:000001">
    <property type="entry name" value="Protein mago nashi homolog"/>
    <property type="match status" value="1"/>
</dbReference>
<dbReference type="Gene3D" id="3.30.1560.10">
    <property type="entry name" value="Mago nashi"/>
    <property type="match status" value="1"/>
</dbReference>
<dbReference type="InterPro" id="IPR004023">
    <property type="entry name" value="Mago_nashi"/>
</dbReference>
<dbReference type="InterPro" id="IPR036605">
    <property type="entry name" value="Mago_nashi_sf"/>
</dbReference>
<dbReference type="PANTHER" id="PTHR12638:SF0">
    <property type="entry name" value="MAGO HOMOLOG, EXON JUNCTION COMPLEX SUBUNIT-RELATED"/>
    <property type="match status" value="1"/>
</dbReference>
<dbReference type="PANTHER" id="PTHR12638">
    <property type="entry name" value="PROTEIN MAGO NASHI HOMOLOG"/>
    <property type="match status" value="1"/>
</dbReference>
<dbReference type="Pfam" id="PF02792">
    <property type="entry name" value="Mago_nashi"/>
    <property type="match status" value="1"/>
</dbReference>
<dbReference type="SUPFAM" id="SSF89817">
    <property type="entry name" value="Mago nashi protein"/>
    <property type="match status" value="1"/>
</dbReference>
<evidence type="ECO:0000250" key="1">
    <source>
        <dbReference type="UniProtKB" id="P61326"/>
    </source>
</evidence>
<evidence type="ECO:0000305" key="2"/>
<gene>
    <name type="primary">magoh</name>
    <name type="ORF">ch211-216k22.5</name>
    <name type="ORF">zgc:112220</name>
</gene>
<accession>Q566Y8</accession>
<organism>
    <name type="scientific">Danio rerio</name>
    <name type="common">Zebrafish</name>
    <name type="synonym">Brachydanio rerio</name>
    <dbReference type="NCBI Taxonomy" id="7955"/>
    <lineage>
        <taxon>Eukaryota</taxon>
        <taxon>Metazoa</taxon>
        <taxon>Chordata</taxon>
        <taxon>Craniata</taxon>
        <taxon>Vertebrata</taxon>
        <taxon>Euteleostomi</taxon>
        <taxon>Actinopterygii</taxon>
        <taxon>Neopterygii</taxon>
        <taxon>Teleostei</taxon>
        <taxon>Ostariophysi</taxon>
        <taxon>Cypriniformes</taxon>
        <taxon>Danionidae</taxon>
        <taxon>Danioninae</taxon>
        <taxon>Danio</taxon>
    </lineage>
</organism>
<keyword id="KW-0963">Cytoplasm</keyword>
<keyword id="KW-0507">mRNA processing</keyword>
<keyword id="KW-0508">mRNA splicing</keyword>
<keyword id="KW-0509">mRNA transport</keyword>
<keyword id="KW-0866">Nonsense-mediated mRNA decay</keyword>
<keyword id="KW-0539">Nucleus</keyword>
<keyword id="KW-1185">Reference proteome</keyword>
<keyword id="KW-0694">RNA-binding</keyword>
<keyword id="KW-0810">Translation regulation</keyword>
<keyword id="KW-0813">Transport</keyword>
<proteinExistence type="evidence at transcript level"/>
<comment type="function">
    <text evidence="1">Core component of the splicing-dependent multiprotein exon junction complex (EJC) deposited at splice junctions on mRNAs. The EJC is a dynamic structure consisting of core proteins and several peripheral nuclear and cytoplasmic associated factors that join the complex only transiently either during EJC assembly or during subsequent mRNA metabolism. The EJC marks the position of the exon-exon junction in the mature mRNA for the gene expression machinery and the core components remain bound to spliced mRNAs throughout all stages of mRNA metabolism thereby influencing downstream processes including nuclear mRNA export, subcellular mRNA localization, translation efficiency and nonsense-mediated mRNA decay (NMD) (By similarity).</text>
</comment>
<comment type="subunit">
    <text evidence="1">Part of the EJC core complex that contains casc3, eif4a3, magoh and rbm8a.</text>
</comment>
<comment type="subcellular location">
    <subcellularLocation>
        <location evidence="1">Nucleus</location>
    </subcellularLocation>
    <subcellularLocation>
        <location evidence="1">Nucleus speckle</location>
    </subcellularLocation>
    <subcellularLocation>
        <location evidence="1">Cytoplasm</location>
    </subcellularLocation>
    <text evidence="1">Travels to the cytoplasm as part of the exon junction complex (EJC) bound to mRNA.</text>
</comment>
<comment type="similarity">
    <text evidence="2">Belongs to the mago nashi family.</text>
</comment>
<feature type="chain" id="PRO_0000378584" description="Protein mago nashi homolog">
    <location>
        <begin position="1"/>
        <end position="147"/>
    </location>
</feature>
<sequence>MSTSDFYLRYYVGHKGKFGHEFLEFEFRPDGKLRYANNSNYKNDVMIRKEAYVHKSVMEELKRIIDDSEITKEDDALWPPPDRVGRQELEIVIGDEHISFTTSKIGSLIDVNQSKDPEGLRVFYYLVQDLKCLVFSLIGLHFKIKPI</sequence>